<keyword id="KW-0067">ATP-binding</keyword>
<keyword id="KW-0997">Cell inner membrane</keyword>
<keyword id="KW-1003">Cell membrane</keyword>
<keyword id="KW-0201">Cytochrome c-type biogenesis</keyword>
<keyword id="KW-0472">Membrane</keyword>
<keyword id="KW-0547">Nucleotide-binding</keyword>
<keyword id="KW-1278">Translocase</keyword>
<keyword id="KW-0813">Transport</keyword>
<protein>
    <recommendedName>
        <fullName evidence="1">Cytochrome c biogenesis ATP-binding export protein CcmA</fullName>
        <ecNumber evidence="1">7.6.2.5</ecNumber>
    </recommendedName>
    <alternativeName>
        <fullName evidence="1">Heme exporter protein A</fullName>
    </alternativeName>
</protein>
<evidence type="ECO:0000255" key="1">
    <source>
        <dbReference type="HAMAP-Rule" id="MF_01707"/>
    </source>
</evidence>
<sequence length="200" mass="22557">MLDVIELDFDYHDQPLLQQISFHLPAGGLLHLKGSNGAGKTTLLKLIAGLLNPEKGEILFERQSIKKDLCTYQKQLCFVGHRSGINPYLTIRENCLYDIHFSPGAVGITELCRLFSLEHLIDYPCGLLSSGQKRQVALLRLWMSKAKLWLLDEPLVALDELSLLTIITKIQEHRAKGGAVLLTSHQDLPLNKADYEEYHL</sequence>
<name>CCMA_LEGPL</name>
<accession>Q5WY52</accession>
<proteinExistence type="inferred from homology"/>
<feature type="chain" id="PRO_0000092186" description="Cytochrome c biogenesis ATP-binding export protein CcmA">
    <location>
        <begin position="1"/>
        <end position="200"/>
    </location>
</feature>
<feature type="domain" description="ABC transporter" evidence="1">
    <location>
        <begin position="2"/>
        <end position="200"/>
    </location>
</feature>
<feature type="binding site" evidence="1">
    <location>
        <begin position="34"/>
        <end position="41"/>
    </location>
    <ligand>
        <name>ATP</name>
        <dbReference type="ChEBI" id="CHEBI:30616"/>
    </ligand>
</feature>
<gene>
    <name evidence="1" type="primary">ccmA</name>
    <name type="ordered locus">lpl0887</name>
</gene>
<comment type="function">
    <text evidence="1">Part of the ABC transporter complex CcmAB involved in the biogenesis of c-type cytochromes; once thought to export heme, this seems not to be the case, but its exact role is uncertain. Responsible for energy coupling to the transport system.</text>
</comment>
<comment type="catalytic activity">
    <reaction evidence="1">
        <text>heme b(in) + ATP + H2O = heme b(out) + ADP + phosphate + H(+)</text>
        <dbReference type="Rhea" id="RHEA:19261"/>
        <dbReference type="ChEBI" id="CHEBI:15377"/>
        <dbReference type="ChEBI" id="CHEBI:15378"/>
        <dbReference type="ChEBI" id="CHEBI:30616"/>
        <dbReference type="ChEBI" id="CHEBI:43474"/>
        <dbReference type="ChEBI" id="CHEBI:60344"/>
        <dbReference type="ChEBI" id="CHEBI:456216"/>
        <dbReference type="EC" id="7.6.2.5"/>
    </reaction>
</comment>
<comment type="subunit">
    <text evidence="1">The complex is composed of two ATP-binding proteins (CcmA) and two transmembrane proteins (CcmB).</text>
</comment>
<comment type="subcellular location">
    <subcellularLocation>
        <location evidence="1">Cell inner membrane</location>
        <topology evidence="1">Peripheral membrane protein</topology>
    </subcellularLocation>
</comment>
<comment type="similarity">
    <text evidence="1">Belongs to the ABC transporter superfamily. CcmA exporter (TC 3.A.1.107) family.</text>
</comment>
<dbReference type="EC" id="7.6.2.5" evidence="1"/>
<dbReference type="EMBL" id="CR628337">
    <property type="protein sequence ID" value="CAH15121.1"/>
    <property type="molecule type" value="Genomic_DNA"/>
</dbReference>
<dbReference type="RefSeq" id="WP_011215036.1">
    <property type="nucleotide sequence ID" value="NC_006369.1"/>
</dbReference>
<dbReference type="SMR" id="Q5WY52"/>
<dbReference type="KEGG" id="lpf:lpl0887"/>
<dbReference type="LegioList" id="lpl0887"/>
<dbReference type="HOGENOM" id="CLU_000604_1_2_6"/>
<dbReference type="Proteomes" id="UP000002517">
    <property type="component" value="Chromosome"/>
</dbReference>
<dbReference type="GO" id="GO:0005886">
    <property type="term" value="C:plasma membrane"/>
    <property type="evidence" value="ECO:0007669"/>
    <property type="project" value="UniProtKB-SubCell"/>
</dbReference>
<dbReference type="GO" id="GO:0015439">
    <property type="term" value="F:ABC-type heme transporter activity"/>
    <property type="evidence" value="ECO:0007669"/>
    <property type="project" value="UniProtKB-EC"/>
</dbReference>
<dbReference type="GO" id="GO:0005524">
    <property type="term" value="F:ATP binding"/>
    <property type="evidence" value="ECO:0007669"/>
    <property type="project" value="UniProtKB-KW"/>
</dbReference>
<dbReference type="GO" id="GO:0016887">
    <property type="term" value="F:ATP hydrolysis activity"/>
    <property type="evidence" value="ECO:0007669"/>
    <property type="project" value="InterPro"/>
</dbReference>
<dbReference type="GO" id="GO:0017004">
    <property type="term" value="P:cytochrome complex assembly"/>
    <property type="evidence" value="ECO:0007669"/>
    <property type="project" value="UniProtKB-KW"/>
</dbReference>
<dbReference type="Gene3D" id="3.40.50.300">
    <property type="entry name" value="P-loop containing nucleotide triphosphate hydrolases"/>
    <property type="match status" value="1"/>
</dbReference>
<dbReference type="InterPro" id="IPR003593">
    <property type="entry name" value="AAA+_ATPase"/>
</dbReference>
<dbReference type="InterPro" id="IPR003439">
    <property type="entry name" value="ABC_transporter-like_ATP-bd"/>
</dbReference>
<dbReference type="InterPro" id="IPR005895">
    <property type="entry name" value="ABC_transptr_haem_export_CcmA"/>
</dbReference>
<dbReference type="InterPro" id="IPR027417">
    <property type="entry name" value="P-loop_NTPase"/>
</dbReference>
<dbReference type="NCBIfam" id="TIGR01189">
    <property type="entry name" value="ccmA"/>
    <property type="match status" value="1"/>
</dbReference>
<dbReference type="NCBIfam" id="NF010062">
    <property type="entry name" value="PRK13540.1"/>
    <property type="match status" value="1"/>
</dbReference>
<dbReference type="PANTHER" id="PTHR43499">
    <property type="entry name" value="ABC TRANSPORTER I FAMILY MEMBER 1"/>
    <property type="match status" value="1"/>
</dbReference>
<dbReference type="PANTHER" id="PTHR43499:SF1">
    <property type="entry name" value="ABC TRANSPORTER I FAMILY MEMBER 1"/>
    <property type="match status" value="1"/>
</dbReference>
<dbReference type="Pfam" id="PF00005">
    <property type="entry name" value="ABC_tran"/>
    <property type="match status" value="1"/>
</dbReference>
<dbReference type="SMART" id="SM00382">
    <property type="entry name" value="AAA"/>
    <property type="match status" value="1"/>
</dbReference>
<dbReference type="SUPFAM" id="SSF52540">
    <property type="entry name" value="P-loop containing nucleoside triphosphate hydrolases"/>
    <property type="match status" value="1"/>
</dbReference>
<dbReference type="PROSITE" id="PS50893">
    <property type="entry name" value="ABC_TRANSPORTER_2"/>
    <property type="match status" value="1"/>
</dbReference>
<dbReference type="PROSITE" id="PS51243">
    <property type="entry name" value="CCMA"/>
    <property type="match status" value="1"/>
</dbReference>
<organism>
    <name type="scientific">Legionella pneumophila (strain Lens)</name>
    <dbReference type="NCBI Taxonomy" id="297245"/>
    <lineage>
        <taxon>Bacteria</taxon>
        <taxon>Pseudomonadati</taxon>
        <taxon>Pseudomonadota</taxon>
        <taxon>Gammaproteobacteria</taxon>
        <taxon>Legionellales</taxon>
        <taxon>Legionellaceae</taxon>
        <taxon>Legionella</taxon>
    </lineage>
</organism>
<reference key="1">
    <citation type="journal article" date="2004" name="Nat. Genet.">
        <title>Evidence in the Legionella pneumophila genome for exploitation of host cell functions and high genome plasticity.</title>
        <authorList>
            <person name="Cazalet C."/>
            <person name="Rusniok C."/>
            <person name="Brueggemann H."/>
            <person name="Zidane N."/>
            <person name="Magnier A."/>
            <person name="Ma L."/>
            <person name="Tichit M."/>
            <person name="Jarraud S."/>
            <person name="Bouchier C."/>
            <person name="Vandenesch F."/>
            <person name="Kunst F."/>
            <person name="Etienne J."/>
            <person name="Glaser P."/>
            <person name="Buchrieser C."/>
        </authorList>
    </citation>
    <scope>NUCLEOTIDE SEQUENCE [LARGE SCALE GENOMIC DNA]</scope>
    <source>
        <strain>Lens</strain>
    </source>
</reference>